<name>ARFG1_RAT</name>
<reference key="1">
    <citation type="journal article" date="1995" name="J. Biol. Chem.">
        <title>ADP-ribosylation factor-directed GTPase-activating protein. Purification and partial characterization.</title>
        <authorList>
            <person name="Makler V."/>
            <person name="Cukierman E."/>
            <person name="Rotman M."/>
            <person name="Admon A."/>
            <person name="Cassel D."/>
        </authorList>
    </citation>
    <scope>NUCLEOTIDE SEQUENCE [MRNA]</scope>
    <scope>FUNCTION</scope>
    <scope>INTERACTION WITH ARF1</scope>
    <scope>PROTEIN SEQUENCE OF 82-95; 140-160; 183-191; 246-255; 264-278; 297-306 AND 361-375</scope>
    <source>
        <tissue>Liver</tissue>
    </source>
</reference>
<reference key="2">
    <citation type="journal article" date="1995" name="Science">
        <title>The ARF1 GTPase-activating protein: zinc finger motif and Golgi complex localization.</title>
        <authorList>
            <person name="Cukierman E."/>
            <person name="Huber I."/>
            <person name="Rotman M."/>
            <person name="Cassel D."/>
        </authorList>
    </citation>
    <scope>NUCLEOTIDE SEQUENCE [MRNA] (ISOFORMS 1; 2 AND 3)</scope>
    <scope>CHARACTERIZATION</scope>
    <scope>MUTAGENESIS OF CYS-22 AND CYS-25</scope>
    <source>
        <tissue>Liver</tissue>
    </source>
</reference>
<reference key="3">
    <citation type="journal article" date="1997" name="EMBO J.">
        <title>The KDEL receptor, ERD2, regulates intracellular traffic by recruiting a GTPase-activating protein for ARF1.</title>
        <authorList>
            <person name="Aoe T."/>
            <person name="Cukierman E."/>
            <person name="Lee A."/>
            <person name="Cassel D."/>
            <person name="Peters P.J."/>
            <person name="Hsu V.W."/>
        </authorList>
    </citation>
    <scope>INTERACTION WITH KDELR1</scope>
</reference>
<reference key="4">
    <citation type="journal article" date="1998" name="J. Biol. Chem.">
        <title>Requirement for both the amino-terminal catalytic domain and a noncatalytic domain for in vivo activity of ADP-ribosylation factor GTPase-activating protein.</title>
        <authorList>
            <person name="Huber I."/>
            <person name="Cukierman E."/>
            <person name="Rotman M."/>
            <person name="Aoe T."/>
            <person name="Hsu V.W."/>
            <person name="Cassel D."/>
        </authorList>
    </citation>
    <scope>CHARACTERIZATION</scope>
    <scope>MUTAGENESIS OF CYS-22</scope>
</reference>
<reference key="5">
    <citation type="journal article" date="2001" name="Dev. Cell">
        <title>KDEL-cargo regulates interactions between proteins involved in COPI vesicle traffic: measurements in living cells using FRET.</title>
        <authorList>
            <person name="Majoul I."/>
            <person name="Straub M."/>
            <person name="Hell S.W."/>
            <person name="Duden R."/>
            <person name="Soling H.D."/>
        </authorList>
    </citation>
    <scope>INTERACTION WITH KDELR1 AND TMED2</scope>
</reference>
<reference key="6">
    <citation type="journal article" date="2001" name="J. Cell Biol.">
        <title>Sorting of Golgi resident proteins into different subpopulations of COPI vesicles: a role for ArfGAP1.</title>
        <authorList>
            <person name="Lanoix J."/>
            <person name="Ouwendijk J."/>
            <person name="Stark A."/>
            <person name="Szafer E."/>
            <person name="Cassel D."/>
            <person name="Dejgaard K."/>
            <person name="Weiss M."/>
            <person name="Nilsson T."/>
        </authorList>
    </citation>
    <scope>INTERACTION WITH RNP24</scope>
</reference>
<reference key="7">
    <citation type="journal article" date="2012" name="Nat. Commun.">
        <title>Quantitative maps of protein phosphorylation sites across 14 different rat organs and tissues.</title>
        <authorList>
            <person name="Lundby A."/>
            <person name="Secher A."/>
            <person name="Lage K."/>
            <person name="Nordsborg N.B."/>
            <person name="Dmytriyev A."/>
            <person name="Lundby C."/>
            <person name="Olsen J.V."/>
        </authorList>
    </citation>
    <scope>PHOSPHORYLATION [LARGE SCALE ANALYSIS] AT THR-135; SER-347; SER-360 AND SER-379</scope>
    <scope>IDENTIFICATION BY MASS SPECTROMETRY [LARGE SCALE ANALYSIS]</scope>
</reference>
<reference key="8">
    <citation type="journal article" date="1999" name="Cell">
        <title>Structural and functional analysis of the ARF1-ARFGAP complex reveals a role for coatomer in GTP hydrolysis.</title>
        <authorList>
            <person name="Goldberg J."/>
        </authorList>
    </citation>
    <scope>X-RAY CRYSTALLOGRAPHY (1.95 ANGSTROMS) OF CATALYTIC DOMAIN IN COMPLEX WITH HUMAN ARF1</scope>
</reference>
<sequence length="415" mass="45442">MASPRTRKVLKEVRAQDENNVCFECGAFNPQWVSVTYGIWICLECSGRHRGLGVHLSFVRSVTMDKWKDIELEKMKAGGNAKFREFLEAQDDYEPSWSLQDKYSSRAAALFRDKVATLAEGKEWSLESSPAQNWTPPQPKTLQFTAHRPAGQPQNVTTSGDKAFEDWLNDDLGSYQGAQENRYVGFGNTVPPQKREDDFLNSAMSSLYSGWSSFTTGASKFASAAKEGATKFGSQASQKASELGHSLNENVLKPAQEKVKEGRIFDDVSSGVSQLASKVQGVGSKGWRDVTTFFSGKAEDTSDRPLEGHSYQNSSGDNSQNSTIDQSFWETFGSAEPPKAKSPSSDSWTCADASTGRRSSDSWDIWGSGSASNNKNSNSDGWESWEGASGEGRAKATKKAAPSTAADEGWDNQNW</sequence>
<evidence type="ECO:0000250" key="1">
    <source>
        <dbReference type="UniProtKB" id="Q8N6T3"/>
    </source>
</evidence>
<evidence type="ECO:0000250" key="2">
    <source>
        <dbReference type="UniProtKB" id="Q9EPJ9"/>
    </source>
</evidence>
<evidence type="ECO:0000255" key="3">
    <source>
        <dbReference type="PROSITE-ProRule" id="PRU00288"/>
    </source>
</evidence>
<evidence type="ECO:0000256" key="4">
    <source>
        <dbReference type="SAM" id="MobiDB-lite"/>
    </source>
</evidence>
<evidence type="ECO:0000269" key="5">
    <source>
    </source>
</evidence>
<evidence type="ECO:0000269" key="6">
    <source>
    </source>
</evidence>
<evidence type="ECO:0000269" key="7">
    <source>
    </source>
</evidence>
<evidence type="ECO:0000269" key="8">
    <source>
    </source>
</evidence>
<evidence type="ECO:0000269" key="9">
    <source>
    </source>
</evidence>
<evidence type="ECO:0000269" key="10">
    <source>
    </source>
</evidence>
<evidence type="ECO:0000269" key="11">
    <source>
    </source>
</evidence>
<evidence type="ECO:0000303" key="12">
    <source>
    </source>
</evidence>
<evidence type="ECO:0007744" key="13">
    <source>
    </source>
</evidence>
<gene>
    <name type="primary">Arfgap1</name>
    <name type="synonym">Arf1gap</name>
</gene>
<proteinExistence type="evidence at protein level"/>
<protein>
    <recommendedName>
        <fullName>ADP-ribosylation factor GTPase-activating protein 1</fullName>
        <shortName>ARF GAP 1</shortName>
    </recommendedName>
    <alternativeName>
        <fullName>ADP-ribosylation factor 1 GTPase-activating protein</fullName>
        <shortName>ARF1 GAP</shortName>
    </alternativeName>
    <alternativeName>
        <fullName>ARF1-directed GTPase-activating protein</fullName>
    </alternativeName>
</protein>
<accession>Q62848</accession>
<dbReference type="EMBL" id="U35776">
    <property type="protein sequence ID" value="AAC52337.1"/>
    <property type="molecule type" value="mRNA"/>
</dbReference>
<dbReference type="RefSeq" id="NP_659558.1">
    <molecule id="Q62848-1"/>
    <property type="nucleotide sequence ID" value="NM_145090.4"/>
</dbReference>
<dbReference type="RefSeq" id="XP_017446953.1">
    <property type="nucleotide sequence ID" value="XM_017591464.1"/>
</dbReference>
<dbReference type="RefSeq" id="XP_038960187.1">
    <molecule id="Q62848-1"/>
    <property type="nucleotide sequence ID" value="XM_039104259.2"/>
</dbReference>
<dbReference type="BMRB" id="Q62848"/>
<dbReference type="SMR" id="Q62848"/>
<dbReference type="BioGRID" id="251587">
    <property type="interactions" value="13"/>
</dbReference>
<dbReference type="CORUM" id="Q62848"/>
<dbReference type="FunCoup" id="Q62848">
    <property type="interactions" value="3562"/>
</dbReference>
<dbReference type="IntAct" id="Q62848">
    <property type="interactions" value="7"/>
</dbReference>
<dbReference type="MINT" id="Q62848"/>
<dbReference type="STRING" id="10116.ENSRNOP00000051916"/>
<dbReference type="BindingDB" id="Q62848"/>
<dbReference type="ChEMBL" id="CHEMBL2146307"/>
<dbReference type="iPTMnet" id="Q62848"/>
<dbReference type="PhosphoSitePlus" id="Q62848"/>
<dbReference type="SwissPalm" id="Q62848"/>
<dbReference type="jPOST" id="Q62848"/>
<dbReference type="PaxDb" id="10116-ENSRNOP00000013900"/>
<dbReference type="DNASU" id="246310"/>
<dbReference type="GeneID" id="246310"/>
<dbReference type="KEGG" id="rno:246310"/>
<dbReference type="AGR" id="RGD:708452"/>
<dbReference type="CTD" id="55738"/>
<dbReference type="RGD" id="708452">
    <property type="gene designation" value="Arfgap1"/>
</dbReference>
<dbReference type="VEuPathDB" id="HostDB:ENSRNOG00000043150"/>
<dbReference type="eggNOG" id="KOG0704">
    <property type="taxonomic scope" value="Eukaryota"/>
</dbReference>
<dbReference type="HOGENOM" id="CLU_044516_0_0_1"/>
<dbReference type="InParanoid" id="Q62848"/>
<dbReference type="OrthoDB" id="983479at2759"/>
<dbReference type="PhylomeDB" id="Q62848"/>
<dbReference type="Reactome" id="R-RNO-6807878">
    <property type="pathway name" value="COPI-mediated anterograde transport"/>
</dbReference>
<dbReference type="Reactome" id="R-RNO-6811434">
    <property type="pathway name" value="COPI-dependent Golgi-to-ER retrograde traffic"/>
</dbReference>
<dbReference type="Reactome" id="R-RNO-8856828">
    <property type="pathway name" value="Clathrin-mediated endocytosis"/>
</dbReference>
<dbReference type="PRO" id="PR:Q62848"/>
<dbReference type="Proteomes" id="UP000002494">
    <property type="component" value="Chromosome 3"/>
</dbReference>
<dbReference type="Bgee" id="ENSRNOG00000043150">
    <property type="expression patterns" value="Expressed in pancreas and 19 other cell types or tissues"/>
</dbReference>
<dbReference type="ExpressionAtlas" id="Q62848">
    <property type="expression patterns" value="baseline and differential"/>
</dbReference>
<dbReference type="GO" id="GO:0000139">
    <property type="term" value="C:Golgi membrane"/>
    <property type="evidence" value="ECO:0000314"/>
    <property type="project" value="RGD"/>
</dbReference>
<dbReference type="GO" id="GO:0014069">
    <property type="term" value="C:postsynaptic density"/>
    <property type="evidence" value="ECO:0000266"/>
    <property type="project" value="RGD"/>
</dbReference>
<dbReference type="GO" id="GO:0045202">
    <property type="term" value="C:synapse"/>
    <property type="evidence" value="ECO:0000266"/>
    <property type="project" value="RGD"/>
</dbReference>
<dbReference type="GO" id="GO:0005096">
    <property type="term" value="F:GTPase activator activity"/>
    <property type="evidence" value="ECO:0000266"/>
    <property type="project" value="RGD"/>
</dbReference>
<dbReference type="GO" id="GO:0008270">
    <property type="term" value="F:zinc ion binding"/>
    <property type="evidence" value="ECO:0007669"/>
    <property type="project" value="UniProtKB-KW"/>
</dbReference>
<dbReference type="GO" id="GO:0015031">
    <property type="term" value="P:protein transport"/>
    <property type="evidence" value="ECO:0007669"/>
    <property type="project" value="UniProtKB-KW"/>
</dbReference>
<dbReference type="GO" id="GO:0032012">
    <property type="term" value="P:regulation of ARF protein signal transduction"/>
    <property type="evidence" value="ECO:0000318"/>
    <property type="project" value="GO_Central"/>
</dbReference>
<dbReference type="GO" id="GO:0030100">
    <property type="term" value="P:regulation of endocytosis"/>
    <property type="evidence" value="ECO:0000266"/>
    <property type="project" value="RGD"/>
</dbReference>
<dbReference type="GO" id="GO:0016192">
    <property type="term" value="P:vesicle-mediated transport"/>
    <property type="evidence" value="ECO:0007669"/>
    <property type="project" value="UniProtKB-KW"/>
</dbReference>
<dbReference type="CDD" id="cd08830">
    <property type="entry name" value="ArfGap_ArfGap1"/>
    <property type="match status" value="1"/>
</dbReference>
<dbReference type="FunFam" id="1.10.220.150:FF:000008">
    <property type="entry name" value="ADP-ribosylation factor GTPase activating protein 1"/>
    <property type="match status" value="1"/>
</dbReference>
<dbReference type="Gene3D" id="1.10.220.150">
    <property type="entry name" value="Arf GTPase activating protein"/>
    <property type="match status" value="1"/>
</dbReference>
<dbReference type="InterPro" id="IPR037278">
    <property type="entry name" value="ARFGAP/RecO"/>
</dbReference>
<dbReference type="InterPro" id="IPR001164">
    <property type="entry name" value="ArfGAP_dom"/>
</dbReference>
<dbReference type="InterPro" id="IPR038508">
    <property type="entry name" value="ArfGAP_dom_sf"/>
</dbReference>
<dbReference type="PANTHER" id="PTHR46395">
    <property type="entry name" value="ADP-RIBOSYLATION FACTOR GTPASE-ACTIVATING PROTEIN 1"/>
    <property type="match status" value="1"/>
</dbReference>
<dbReference type="PANTHER" id="PTHR46395:SF1">
    <property type="entry name" value="ADP-RIBOSYLATION FACTOR GTPASE-ACTIVATING PROTEIN 1"/>
    <property type="match status" value="1"/>
</dbReference>
<dbReference type="Pfam" id="PF01412">
    <property type="entry name" value="ArfGap"/>
    <property type="match status" value="1"/>
</dbReference>
<dbReference type="PRINTS" id="PR00405">
    <property type="entry name" value="REVINTRACTNG"/>
</dbReference>
<dbReference type="SMART" id="SM00105">
    <property type="entry name" value="ArfGap"/>
    <property type="match status" value="1"/>
</dbReference>
<dbReference type="SUPFAM" id="SSF57863">
    <property type="entry name" value="ArfGap/RecO-like zinc finger"/>
    <property type="match status" value="1"/>
</dbReference>
<dbReference type="PROSITE" id="PS50115">
    <property type="entry name" value="ARFGAP"/>
    <property type="match status" value="1"/>
</dbReference>
<organism>
    <name type="scientific">Rattus norvegicus</name>
    <name type="common">Rat</name>
    <dbReference type="NCBI Taxonomy" id="10116"/>
    <lineage>
        <taxon>Eukaryota</taxon>
        <taxon>Metazoa</taxon>
        <taxon>Chordata</taxon>
        <taxon>Craniata</taxon>
        <taxon>Vertebrata</taxon>
        <taxon>Euteleostomi</taxon>
        <taxon>Mammalia</taxon>
        <taxon>Eutheria</taxon>
        <taxon>Euarchontoglires</taxon>
        <taxon>Glires</taxon>
        <taxon>Rodentia</taxon>
        <taxon>Myomorpha</taxon>
        <taxon>Muroidea</taxon>
        <taxon>Muridae</taxon>
        <taxon>Murinae</taxon>
        <taxon>Rattus</taxon>
    </lineage>
</organism>
<feature type="chain" id="PRO_0000074192" description="ADP-ribosylation factor GTPase-activating protein 1">
    <location>
        <begin position="1"/>
        <end position="415"/>
    </location>
</feature>
<feature type="domain" description="Arf-GAP" evidence="3">
    <location>
        <begin position="7"/>
        <end position="124"/>
    </location>
</feature>
<feature type="zinc finger region" description="C4-type" evidence="3">
    <location>
        <begin position="22"/>
        <end position="45"/>
    </location>
</feature>
<feature type="region of interest" description="Disordered" evidence="4">
    <location>
        <begin position="126"/>
        <end position="161"/>
    </location>
</feature>
<feature type="region of interest" description="Disordered" evidence="4">
    <location>
        <begin position="295"/>
        <end position="415"/>
    </location>
</feature>
<feature type="compositionally biased region" description="Polar residues" evidence="4">
    <location>
        <begin position="126"/>
        <end position="144"/>
    </location>
</feature>
<feature type="compositionally biased region" description="Basic and acidic residues" evidence="4">
    <location>
        <begin position="297"/>
        <end position="307"/>
    </location>
</feature>
<feature type="compositionally biased region" description="Polar residues" evidence="4">
    <location>
        <begin position="310"/>
        <end position="329"/>
    </location>
</feature>
<feature type="compositionally biased region" description="Low complexity" evidence="4">
    <location>
        <begin position="334"/>
        <end position="347"/>
    </location>
</feature>
<feature type="compositionally biased region" description="Low complexity" evidence="4">
    <location>
        <begin position="362"/>
        <end position="388"/>
    </location>
</feature>
<feature type="modified residue" description="Phosphothreonine" evidence="13">
    <location>
        <position position="135"/>
    </location>
</feature>
<feature type="modified residue" description="Phosphothreonine" evidence="1">
    <location>
        <position position="189"/>
    </location>
</feature>
<feature type="modified residue" description="N6-acetyllysine" evidence="1">
    <location>
        <position position="231"/>
    </location>
</feature>
<feature type="modified residue" description="Phosphoserine" evidence="1">
    <location>
        <position position="246"/>
    </location>
</feature>
<feature type="modified residue" description="Phosphoserine" evidence="1">
    <location>
        <position position="342"/>
    </location>
</feature>
<feature type="modified residue" description="Phosphoserine" evidence="2">
    <location>
        <position position="345"/>
    </location>
</feature>
<feature type="modified residue" description="Phosphoserine" evidence="13">
    <location>
        <position position="347"/>
    </location>
</feature>
<feature type="modified residue" description="Phosphothreonine" evidence="1">
    <location>
        <position position="349"/>
    </location>
</feature>
<feature type="modified residue" description="Phosphoserine" evidence="13">
    <location>
        <position position="360"/>
    </location>
</feature>
<feature type="modified residue" description="Phosphoserine" evidence="2">
    <location>
        <position position="362"/>
    </location>
</feature>
<feature type="modified residue" description="Phosphoserine" evidence="13">
    <location>
        <position position="379"/>
    </location>
</feature>
<feature type="splice variant" id="VSP_000300" description="In isoform 2." evidence="12">
    <location>
        <begin position="21"/>
        <end position="57"/>
    </location>
</feature>
<feature type="splice variant" id="VSP_000301" description="In isoform 3." evidence="12">
    <original>QGVG</original>
    <variation>GLPC</variation>
    <location>
        <begin position="280"/>
        <end position="283"/>
    </location>
</feature>
<feature type="splice variant" id="VSP_000302" description="In isoform 3." evidence="12">
    <location>
        <begin position="284"/>
        <end position="415"/>
    </location>
</feature>
<feature type="mutagenesis site" description="Loss of GAP activity." evidence="9 11">
    <original>C</original>
    <variation>A</variation>
    <location>
        <position position="22"/>
    </location>
</feature>
<feature type="mutagenesis site" description="Loss of GAP activity." evidence="9">
    <original>C</original>
    <variation>A</variation>
    <location>
        <position position="25"/>
    </location>
</feature>
<comment type="function">
    <text evidence="8">GTPase-activating protein (GAP) for the ADP ribosylation factor 1 (ARF1). Involved in membrane trafficking and /or vesicle transport. Promotes hydrolysis of the ARF1-bound GTP and thus, is required for the dissociation of coat proteins from Golgi-derived membranes and vesicles, a prerequisite for vesicle's fusion with target compartment. Probably regulates ARF1-mediated transport via its interaction with the KDELR proteins and TMED2. Overexpression induces the redistribution of the entire Golgi complex to the endoplasmic reticulum, as when ARF1 is deactivated. Its activity is stimulated by phosphoinosides and inhibited by phosphatidylcholine.</text>
</comment>
<comment type="subunit">
    <text evidence="5 6 7 8 10">Interacts with ARF1. Interacts with the COPI coat proteins, KDELR1 and TMED2. It is probably a component of the COPI coat protein complex. The interaction with TMED2 inhibits the GAP activity.</text>
</comment>
<comment type="interaction">
    <interactant intactId="EBI-4398879">
        <id>Q62848</id>
    </interactant>
    <interactant intactId="EBI-5323863">
        <id>Q5S007</id>
        <label>LRRK2</label>
    </interactant>
    <organismsDiffer>true</organismsDiffer>
    <experiments>7</experiments>
</comment>
<comment type="subcellular location">
    <subcellularLocation>
        <location>Cytoplasm</location>
    </subcellularLocation>
    <subcellularLocation>
        <location>Golgi apparatus</location>
    </subcellularLocation>
    <text>Associates with the Golgi complex.</text>
</comment>
<comment type="alternative products">
    <event type="alternative splicing"/>
    <isoform>
        <id>Q62848-1</id>
        <name>1</name>
        <sequence type="displayed"/>
    </isoform>
    <isoform>
        <id>Q62848-2</id>
        <name>2</name>
        <name>W15</name>
        <sequence type="described" ref="VSP_000300"/>
    </isoform>
    <isoform>
        <id>Q62848-3</id>
        <name>3</name>
        <name>Z5</name>
        <sequence type="described" ref="VSP_000301 VSP_000302"/>
    </isoform>
    <text>Experimental confirmation may be lacking for some isoforms.</text>
</comment>
<comment type="tissue specificity">
    <text>Widely expressed. Highly expressed in brain and liver.</text>
</comment>
<comment type="domain">
    <text>The region downstream of Arf-GAP domain is essential to GAP activity in vivo. This region may be required for its targeting to Golgi membranes.</text>
</comment>
<keyword id="KW-0007">Acetylation</keyword>
<keyword id="KW-0025">Alternative splicing</keyword>
<keyword id="KW-0963">Cytoplasm</keyword>
<keyword id="KW-0903">Direct protein sequencing</keyword>
<keyword id="KW-0931">ER-Golgi transport</keyword>
<keyword id="KW-0333">Golgi apparatus</keyword>
<keyword id="KW-0343">GTPase activation</keyword>
<keyword id="KW-0479">Metal-binding</keyword>
<keyword id="KW-0597">Phosphoprotein</keyword>
<keyword id="KW-0653">Protein transport</keyword>
<keyword id="KW-1185">Reference proteome</keyword>
<keyword id="KW-0813">Transport</keyword>
<keyword id="KW-0862">Zinc</keyword>
<keyword id="KW-0863">Zinc-finger</keyword>